<gene>
    <name evidence="1" type="primary">cynS</name>
    <name type="ordered locus">aq_212</name>
</gene>
<evidence type="ECO:0000255" key="1">
    <source>
        <dbReference type="HAMAP-Rule" id="MF_00535"/>
    </source>
</evidence>
<keyword id="KW-0456">Lyase</keyword>
<keyword id="KW-1185">Reference proteome</keyword>
<protein>
    <recommendedName>
        <fullName evidence="1">Cyanate hydratase</fullName>
        <shortName evidence="1">Cyanase</shortName>
        <ecNumber evidence="1">4.2.1.104</ecNumber>
    </recommendedName>
    <alternativeName>
        <fullName evidence="1">Cyanate hydrolase</fullName>
    </alternativeName>
    <alternativeName>
        <fullName evidence="1">Cyanate lyase</fullName>
    </alternativeName>
</protein>
<proteinExistence type="inferred from homology"/>
<feature type="chain" id="PRO_0000187521" description="Cyanate hydratase">
    <location>
        <begin position="1"/>
        <end position="149"/>
    </location>
</feature>
<feature type="active site" evidence="1">
    <location>
        <position position="90"/>
    </location>
</feature>
<feature type="active site" evidence="1">
    <location>
        <position position="93"/>
    </location>
</feature>
<feature type="active site" evidence="1">
    <location>
        <position position="116"/>
    </location>
</feature>
<sequence>MRSDIGRLSKYLIERKKNLGLTWEDVSRKLGKSPVYCAMLFYGYAQADDEEVKAVAELLNLEEKELAELKDAPYREPQQPVPPTDPFVYRLYEVVILYGPALKDVAHEMFGDGIMSAIDMSVELEKVEQEGAERMVLTFNGKWLKYRKF</sequence>
<organism>
    <name type="scientific">Aquifex aeolicus (strain VF5)</name>
    <dbReference type="NCBI Taxonomy" id="224324"/>
    <lineage>
        <taxon>Bacteria</taxon>
        <taxon>Pseudomonadati</taxon>
        <taxon>Aquificota</taxon>
        <taxon>Aquificia</taxon>
        <taxon>Aquificales</taxon>
        <taxon>Aquificaceae</taxon>
        <taxon>Aquifex</taxon>
    </lineage>
</organism>
<name>CYNS_AQUAE</name>
<reference key="1">
    <citation type="journal article" date="1998" name="Nature">
        <title>The complete genome of the hyperthermophilic bacterium Aquifex aeolicus.</title>
        <authorList>
            <person name="Deckert G."/>
            <person name="Warren P.V."/>
            <person name="Gaasterland T."/>
            <person name="Young W.G."/>
            <person name="Lenox A.L."/>
            <person name="Graham D.E."/>
            <person name="Overbeek R."/>
            <person name="Snead M.A."/>
            <person name="Keller M."/>
            <person name="Aujay M."/>
            <person name="Huber R."/>
            <person name="Feldman R.A."/>
            <person name="Short J.M."/>
            <person name="Olsen G.J."/>
            <person name="Swanson R.V."/>
        </authorList>
    </citation>
    <scope>NUCLEOTIDE SEQUENCE [LARGE SCALE GENOMIC DNA]</scope>
    <source>
        <strain>VF5</strain>
    </source>
</reference>
<dbReference type="EC" id="4.2.1.104" evidence="1"/>
<dbReference type="EMBL" id="AE000657">
    <property type="protein sequence ID" value="AAC06548.1"/>
    <property type="molecule type" value="Genomic_DNA"/>
</dbReference>
<dbReference type="PIR" id="G70319">
    <property type="entry name" value="G70319"/>
</dbReference>
<dbReference type="RefSeq" id="NP_213147.1">
    <property type="nucleotide sequence ID" value="NC_000918.1"/>
</dbReference>
<dbReference type="RefSeq" id="WP_010880085.1">
    <property type="nucleotide sequence ID" value="NC_000918.1"/>
</dbReference>
<dbReference type="SMR" id="O66587"/>
<dbReference type="FunCoup" id="O66587">
    <property type="interactions" value="120"/>
</dbReference>
<dbReference type="STRING" id="224324.aq_212"/>
<dbReference type="EnsemblBacteria" id="AAC06548">
    <property type="protein sequence ID" value="AAC06548"/>
    <property type="gene ID" value="aq_212"/>
</dbReference>
<dbReference type="KEGG" id="aae:aq_212"/>
<dbReference type="PATRIC" id="fig|224324.8.peg.178"/>
<dbReference type="eggNOG" id="COG1513">
    <property type="taxonomic scope" value="Bacteria"/>
</dbReference>
<dbReference type="HOGENOM" id="CLU_103452_1_0_0"/>
<dbReference type="InParanoid" id="O66587"/>
<dbReference type="OrthoDB" id="9785870at2"/>
<dbReference type="Proteomes" id="UP000000798">
    <property type="component" value="Chromosome"/>
</dbReference>
<dbReference type="GO" id="GO:0008824">
    <property type="term" value="F:cyanate hydratase activity"/>
    <property type="evidence" value="ECO:0007669"/>
    <property type="project" value="UniProtKB-UniRule"/>
</dbReference>
<dbReference type="GO" id="GO:0003677">
    <property type="term" value="F:DNA binding"/>
    <property type="evidence" value="ECO:0007669"/>
    <property type="project" value="InterPro"/>
</dbReference>
<dbReference type="GO" id="GO:0009439">
    <property type="term" value="P:cyanate metabolic process"/>
    <property type="evidence" value="ECO:0007669"/>
    <property type="project" value="UniProtKB-UniRule"/>
</dbReference>
<dbReference type="CDD" id="cd00559">
    <property type="entry name" value="Cyanase_C"/>
    <property type="match status" value="1"/>
</dbReference>
<dbReference type="Gene3D" id="3.30.1160.10">
    <property type="entry name" value="Cyanate lyase, C-terminal domain"/>
    <property type="match status" value="1"/>
</dbReference>
<dbReference type="Gene3D" id="1.10.260.40">
    <property type="entry name" value="lambda repressor-like DNA-binding domains"/>
    <property type="match status" value="1"/>
</dbReference>
<dbReference type="HAMAP" id="MF_00535">
    <property type="entry name" value="Cyanate_hydrat"/>
    <property type="match status" value="1"/>
</dbReference>
<dbReference type="InterPro" id="IPR001387">
    <property type="entry name" value="Cro/C1-type_HTH"/>
</dbReference>
<dbReference type="InterPro" id="IPR008076">
    <property type="entry name" value="Cyanase"/>
</dbReference>
<dbReference type="InterPro" id="IPR003712">
    <property type="entry name" value="Cyanate_lyase_C"/>
</dbReference>
<dbReference type="InterPro" id="IPR036581">
    <property type="entry name" value="Cyanate_lyase_C_sf"/>
</dbReference>
<dbReference type="InterPro" id="IPR010982">
    <property type="entry name" value="Lambda_DNA-bd_dom_sf"/>
</dbReference>
<dbReference type="NCBIfam" id="TIGR00673">
    <property type="entry name" value="cynS"/>
    <property type="match status" value="1"/>
</dbReference>
<dbReference type="NCBIfam" id="NF002773">
    <property type="entry name" value="PRK02866.1"/>
    <property type="match status" value="1"/>
</dbReference>
<dbReference type="PANTHER" id="PTHR34186">
    <property type="entry name" value="CYANATE HYDRATASE"/>
    <property type="match status" value="1"/>
</dbReference>
<dbReference type="PANTHER" id="PTHR34186:SF2">
    <property type="entry name" value="CYANATE HYDRATASE"/>
    <property type="match status" value="1"/>
</dbReference>
<dbReference type="Pfam" id="PF02560">
    <property type="entry name" value="Cyanate_lyase"/>
    <property type="match status" value="1"/>
</dbReference>
<dbReference type="Pfam" id="PF01381">
    <property type="entry name" value="HTH_3"/>
    <property type="match status" value="1"/>
</dbReference>
<dbReference type="PIRSF" id="PIRSF001263">
    <property type="entry name" value="Cyanate_hydratas"/>
    <property type="match status" value="1"/>
</dbReference>
<dbReference type="PRINTS" id="PR01693">
    <property type="entry name" value="CYANASE"/>
</dbReference>
<dbReference type="SMART" id="SM01116">
    <property type="entry name" value="Cyanate_lyase"/>
    <property type="match status" value="1"/>
</dbReference>
<dbReference type="SMART" id="SM00530">
    <property type="entry name" value="HTH_XRE"/>
    <property type="match status" value="1"/>
</dbReference>
<dbReference type="SUPFAM" id="SSF55234">
    <property type="entry name" value="Cyanase C-terminal domain"/>
    <property type="match status" value="1"/>
</dbReference>
<dbReference type="SUPFAM" id="SSF47413">
    <property type="entry name" value="lambda repressor-like DNA-binding domains"/>
    <property type="match status" value="1"/>
</dbReference>
<accession>O66587</accession>
<comment type="function">
    <text evidence="1">Catalyzes the reaction of cyanate with bicarbonate to produce ammonia and carbon dioxide.</text>
</comment>
<comment type="catalytic activity">
    <reaction evidence="1">
        <text>cyanate + hydrogencarbonate + 3 H(+) = NH4(+) + 2 CO2</text>
        <dbReference type="Rhea" id="RHEA:11120"/>
        <dbReference type="ChEBI" id="CHEBI:15378"/>
        <dbReference type="ChEBI" id="CHEBI:16526"/>
        <dbReference type="ChEBI" id="CHEBI:17544"/>
        <dbReference type="ChEBI" id="CHEBI:28938"/>
        <dbReference type="ChEBI" id="CHEBI:29195"/>
        <dbReference type="EC" id="4.2.1.104"/>
    </reaction>
</comment>
<comment type="similarity">
    <text evidence="1">Belongs to the cyanase family.</text>
</comment>